<protein>
    <recommendedName>
        <fullName evidence="1">1-deoxy-D-xylulose-5-phosphate synthase</fullName>
        <ecNumber evidence="1">2.2.1.7</ecNumber>
    </recommendedName>
    <alternativeName>
        <fullName evidence="1">1-deoxyxylulose-5-phosphate synthase</fullName>
        <shortName evidence="1">DXP synthase</shortName>
        <shortName evidence="1">DXPS</shortName>
    </alternativeName>
</protein>
<dbReference type="EC" id="2.2.1.7" evidence="1"/>
<dbReference type="EMBL" id="AJ965256">
    <property type="protein sequence ID" value="CAI82881.1"/>
    <property type="molecule type" value="Genomic_DNA"/>
</dbReference>
<dbReference type="SMR" id="Q3ZXC2"/>
<dbReference type="KEGG" id="deh:cbdbA720"/>
<dbReference type="HOGENOM" id="CLU_009227_1_4_0"/>
<dbReference type="UniPathway" id="UPA00064">
    <property type="reaction ID" value="UER00091"/>
</dbReference>
<dbReference type="Proteomes" id="UP000000433">
    <property type="component" value="Chromosome"/>
</dbReference>
<dbReference type="GO" id="GO:0005829">
    <property type="term" value="C:cytosol"/>
    <property type="evidence" value="ECO:0007669"/>
    <property type="project" value="TreeGrafter"/>
</dbReference>
<dbReference type="GO" id="GO:0008661">
    <property type="term" value="F:1-deoxy-D-xylulose-5-phosphate synthase activity"/>
    <property type="evidence" value="ECO:0007669"/>
    <property type="project" value="UniProtKB-UniRule"/>
</dbReference>
<dbReference type="GO" id="GO:0000287">
    <property type="term" value="F:magnesium ion binding"/>
    <property type="evidence" value="ECO:0007669"/>
    <property type="project" value="UniProtKB-UniRule"/>
</dbReference>
<dbReference type="GO" id="GO:0030976">
    <property type="term" value="F:thiamine pyrophosphate binding"/>
    <property type="evidence" value="ECO:0007669"/>
    <property type="project" value="UniProtKB-UniRule"/>
</dbReference>
<dbReference type="GO" id="GO:0052865">
    <property type="term" value="P:1-deoxy-D-xylulose 5-phosphate biosynthetic process"/>
    <property type="evidence" value="ECO:0007669"/>
    <property type="project" value="UniProtKB-UniPathway"/>
</dbReference>
<dbReference type="GO" id="GO:0019288">
    <property type="term" value="P:isopentenyl diphosphate biosynthetic process, methylerythritol 4-phosphate pathway"/>
    <property type="evidence" value="ECO:0007669"/>
    <property type="project" value="TreeGrafter"/>
</dbReference>
<dbReference type="GO" id="GO:0016114">
    <property type="term" value="P:terpenoid biosynthetic process"/>
    <property type="evidence" value="ECO:0007669"/>
    <property type="project" value="UniProtKB-UniRule"/>
</dbReference>
<dbReference type="GO" id="GO:0009228">
    <property type="term" value="P:thiamine biosynthetic process"/>
    <property type="evidence" value="ECO:0007669"/>
    <property type="project" value="UniProtKB-UniRule"/>
</dbReference>
<dbReference type="CDD" id="cd02007">
    <property type="entry name" value="TPP_DXS"/>
    <property type="match status" value="1"/>
</dbReference>
<dbReference type="CDD" id="cd07033">
    <property type="entry name" value="TPP_PYR_DXS_TK_like"/>
    <property type="match status" value="1"/>
</dbReference>
<dbReference type="FunFam" id="3.40.50.920:FF:000002">
    <property type="entry name" value="1-deoxy-D-xylulose-5-phosphate synthase"/>
    <property type="match status" value="1"/>
</dbReference>
<dbReference type="FunFam" id="3.40.50.970:FF:000005">
    <property type="entry name" value="1-deoxy-D-xylulose-5-phosphate synthase"/>
    <property type="match status" value="1"/>
</dbReference>
<dbReference type="Gene3D" id="3.40.50.920">
    <property type="match status" value="1"/>
</dbReference>
<dbReference type="Gene3D" id="3.40.50.970">
    <property type="match status" value="2"/>
</dbReference>
<dbReference type="HAMAP" id="MF_00315">
    <property type="entry name" value="DXP_synth"/>
    <property type="match status" value="1"/>
</dbReference>
<dbReference type="InterPro" id="IPR005477">
    <property type="entry name" value="Dxylulose-5-P_synthase"/>
</dbReference>
<dbReference type="InterPro" id="IPR029061">
    <property type="entry name" value="THDP-binding"/>
</dbReference>
<dbReference type="InterPro" id="IPR009014">
    <property type="entry name" value="Transketo_C/PFOR_II"/>
</dbReference>
<dbReference type="InterPro" id="IPR005475">
    <property type="entry name" value="Transketolase-like_Pyr-bd"/>
</dbReference>
<dbReference type="InterPro" id="IPR033248">
    <property type="entry name" value="Transketolase_C"/>
</dbReference>
<dbReference type="InterPro" id="IPR049557">
    <property type="entry name" value="Transketolase_CS"/>
</dbReference>
<dbReference type="NCBIfam" id="TIGR00204">
    <property type="entry name" value="dxs"/>
    <property type="match status" value="1"/>
</dbReference>
<dbReference type="NCBIfam" id="NF003933">
    <property type="entry name" value="PRK05444.2-2"/>
    <property type="match status" value="1"/>
</dbReference>
<dbReference type="PANTHER" id="PTHR43322">
    <property type="entry name" value="1-D-DEOXYXYLULOSE 5-PHOSPHATE SYNTHASE-RELATED"/>
    <property type="match status" value="1"/>
</dbReference>
<dbReference type="PANTHER" id="PTHR43322:SF5">
    <property type="entry name" value="1-DEOXY-D-XYLULOSE-5-PHOSPHATE SYNTHASE, CHLOROPLASTIC"/>
    <property type="match status" value="1"/>
</dbReference>
<dbReference type="Pfam" id="PF13292">
    <property type="entry name" value="DXP_synthase_N"/>
    <property type="match status" value="1"/>
</dbReference>
<dbReference type="Pfam" id="PF02779">
    <property type="entry name" value="Transket_pyr"/>
    <property type="match status" value="1"/>
</dbReference>
<dbReference type="Pfam" id="PF02780">
    <property type="entry name" value="Transketolase_C"/>
    <property type="match status" value="1"/>
</dbReference>
<dbReference type="SMART" id="SM00861">
    <property type="entry name" value="Transket_pyr"/>
    <property type="match status" value="1"/>
</dbReference>
<dbReference type="SUPFAM" id="SSF52518">
    <property type="entry name" value="Thiamin diphosphate-binding fold (THDP-binding)"/>
    <property type="match status" value="2"/>
</dbReference>
<dbReference type="SUPFAM" id="SSF52922">
    <property type="entry name" value="TK C-terminal domain-like"/>
    <property type="match status" value="1"/>
</dbReference>
<dbReference type="PROSITE" id="PS00801">
    <property type="entry name" value="TRANSKETOLASE_1"/>
    <property type="match status" value="1"/>
</dbReference>
<feature type="chain" id="PRO_0000256409" description="1-deoxy-D-xylulose-5-phosphate synthase">
    <location>
        <begin position="1"/>
        <end position="647"/>
    </location>
</feature>
<feature type="binding site" evidence="1">
    <location>
        <position position="88"/>
    </location>
    <ligand>
        <name>thiamine diphosphate</name>
        <dbReference type="ChEBI" id="CHEBI:58937"/>
    </ligand>
</feature>
<feature type="binding site" evidence="1">
    <location>
        <begin position="129"/>
        <end position="131"/>
    </location>
    <ligand>
        <name>thiamine diphosphate</name>
        <dbReference type="ChEBI" id="CHEBI:58937"/>
    </ligand>
</feature>
<feature type="binding site" evidence="1">
    <location>
        <position position="160"/>
    </location>
    <ligand>
        <name>Mg(2+)</name>
        <dbReference type="ChEBI" id="CHEBI:18420"/>
    </ligand>
</feature>
<feature type="binding site" evidence="1">
    <location>
        <begin position="161"/>
        <end position="162"/>
    </location>
    <ligand>
        <name>thiamine diphosphate</name>
        <dbReference type="ChEBI" id="CHEBI:58937"/>
    </ligand>
</feature>
<feature type="binding site" evidence="1">
    <location>
        <position position="189"/>
    </location>
    <ligand>
        <name>Mg(2+)</name>
        <dbReference type="ChEBI" id="CHEBI:18420"/>
    </ligand>
</feature>
<feature type="binding site" evidence="1">
    <location>
        <position position="189"/>
    </location>
    <ligand>
        <name>thiamine diphosphate</name>
        <dbReference type="ChEBI" id="CHEBI:58937"/>
    </ligand>
</feature>
<feature type="binding site" evidence="1">
    <location>
        <position position="300"/>
    </location>
    <ligand>
        <name>thiamine diphosphate</name>
        <dbReference type="ChEBI" id="CHEBI:58937"/>
    </ligand>
</feature>
<feature type="binding site" evidence="1">
    <location>
        <position position="377"/>
    </location>
    <ligand>
        <name>thiamine diphosphate</name>
        <dbReference type="ChEBI" id="CHEBI:58937"/>
    </ligand>
</feature>
<proteinExistence type="inferred from homology"/>
<organism>
    <name type="scientific">Dehalococcoides mccartyi (strain CBDB1)</name>
    <dbReference type="NCBI Taxonomy" id="255470"/>
    <lineage>
        <taxon>Bacteria</taxon>
        <taxon>Bacillati</taxon>
        <taxon>Chloroflexota</taxon>
        <taxon>Dehalococcoidia</taxon>
        <taxon>Dehalococcoidales</taxon>
        <taxon>Dehalococcoidaceae</taxon>
        <taxon>Dehalococcoides</taxon>
    </lineage>
</organism>
<gene>
    <name evidence="1" type="primary">dxs</name>
    <name type="ordered locus">cbdbA720</name>
</gene>
<comment type="function">
    <text evidence="1">Catalyzes the acyloin condensation reaction between C atoms 2 and 3 of pyruvate and glyceraldehyde 3-phosphate to yield 1-deoxy-D-xylulose-5-phosphate (DXP).</text>
</comment>
<comment type="catalytic activity">
    <reaction evidence="1">
        <text>D-glyceraldehyde 3-phosphate + pyruvate + H(+) = 1-deoxy-D-xylulose 5-phosphate + CO2</text>
        <dbReference type="Rhea" id="RHEA:12605"/>
        <dbReference type="ChEBI" id="CHEBI:15361"/>
        <dbReference type="ChEBI" id="CHEBI:15378"/>
        <dbReference type="ChEBI" id="CHEBI:16526"/>
        <dbReference type="ChEBI" id="CHEBI:57792"/>
        <dbReference type="ChEBI" id="CHEBI:59776"/>
        <dbReference type="EC" id="2.2.1.7"/>
    </reaction>
</comment>
<comment type="cofactor">
    <cofactor evidence="1">
        <name>Mg(2+)</name>
        <dbReference type="ChEBI" id="CHEBI:18420"/>
    </cofactor>
    <text evidence="1">Binds 1 Mg(2+) ion per subunit.</text>
</comment>
<comment type="cofactor">
    <cofactor evidence="1">
        <name>thiamine diphosphate</name>
        <dbReference type="ChEBI" id="CHEBI:58937"/>
    </cofactor>
    <text evidence="1">Binds 1 thiamine pyrophosphate per subunit.</text>
</comment>
<comment type="pathway">
    <text evidence="1">Metabolic intermediate biosynthesis; 1-deoxy-D-xylulose 5-phosphate biosynthesis; 1-deoxy-D-xylulose 5-phosphate from D-glyceraldehyde 3-phosphate and pyruvate: step 1/1.</text>
</comment>
<comment type="subunit">
    <text evidence="1">Homodimer.</text>
</comment>
<comment type="similarity">
    <text evidence="1">Belongs to the transketolase family. DXPS subfamily.</text>
</comment>
<sequence>MNTGLEISILHNLEMSKLLDTINSPSDLKKLSLDELRELAVQIREELVNRVTLNGGHLASSLGVVELTIALHRVFESPKDKIIWDVGHQSYAHKLLTGRREQFATLRQHGGLSGFTCRDESPHDPFGAGHASTSISAGLGMAVARDLAKEDYSVISVIGDGAISGGMSFEAINNAGHLHTKFIVILNDNGMAISPSTGALSKFLNNVRFDPRFEFAKRNAKQTITNMPFGKAVWAFTKSIKRKFEKSMLPGSLWEELGFIYLGPVDGHNIRELEAALKRAKDFESKPVLIHMITKKGKGYDDAEADAVKYHGISPKSGGLKSSHGLSYSQVFGQTLHKIMSQNPQVVAITAAMTDGCGLGEIAAAFPDRVFDVGICEQHAVTFAAGMATQGYIPVVVIYSTFLQRGFDQIIHDVCLQKLPVVFAIDRGGIVGDDGKTHQGIFDLSFMSLIPDMVVSAPSDENDLQHLIYTAVNSGKPFALRYPRGFGEGAEIESSLHNIPIGQNEILVNGSDVAILATGKSVAFAKDALEILTESGIKPTLVNNRYISPLDSELVLKIAQSHKYLVTVEENVISGGLGSRINTLLAEAGLVNKIKIANIGIPDKFVEHGNQSLLRAKYGLDGKGIAQRVLSLVGNPNEMKHPQIICP</sequence>
<reference key="1">
    <citation type="journal article" date="2005" name="Nat. Biotechnol.">
        <title>Genome sequence of the chlorinated compound-respiring bacterium Dehalococcoides species strain CBDB1.</title>
        <authorList>
            <person name="Kube M."/>
            <person name="Beck A."/>
            <person name="Zinder S.H."/>
            <person name="Kuhl H."/>
            <person name="Reinhardt R."/>
            <person name="Adrian L."/>
        </authorList>
    </citation>
    <scope>NUCLEOTIDE SEQUENCE [LARGE SCALE GENOMIC DNA]</scope>
    <source>
        <strain>CBDB1</strain>
    </source>
</reference>
<evidence type="ECO:0000255" key="1">
    <source>
        <dbReference type="HAMAP-Rule" id="MF_00315"/>
    </source>
</evidence>
<name>DXS_DEHMC</name>
<keyword id="KW-0414">Isoprene biosynthesis</keyword>
<keyword id="KW-0460">Magnesium</keyword>
<keyword id="KW-0479">Metal-binding</keyword>
<keyword id="KW-0784">Thiamine biosynthesis</keyword>
<keyword id="KW-0786">Thiamine pyrophosphate</keyword>
<keyword id="KW-0808">Transferase</keyword>
<accession>Q3ZXC2</accession>